<keyword id="KW-0067">ATP-binding</keyword>
<keyword id="KW-0436">Ligase</keyword>
<keyword id="KW-0460">Magnesium</keyword>
<keyword id="KW-0479">Metal-binding</keyword>
<keyword id="KW-0547">Nucleotide-binding</keyword>
<keyword id="KW-1185">Reference proteome</keyword>
<keyword id="KW-0816">Tricarboxylic acid cycle</keyword>
<sequence length="388" mass="41308">MNLHEYQAKELLASYGLPVQGGILAHNGEEAAAAYDKLGGKFAVVKAQVHAGGRGKAGGVKVVKSREKAKEVAESLIGTNLVTYQTDANGQPVNSVLVCEDMYPVQTELYLGAVVDRSTRRVTFMASTEGGVEIEKVAAETPEKIFKVTVDPLVGLQPCQAREVAFQLGLKDKQINEFAKLMTGAYKAFVENDFALFEVNPLAVRENGALACVDGKIGIDSNALYRLPKIAELRDKSQENERELKASEFDLNYVALEGKIGCMVNGAGLAMATMDIIKLKGGQPANFLDVGGGATKDRVVEAFKLILEDKSVKGVLINIFGGIVRCDMIAEAIVAAVKEINVNVPVVVRLEGNNAELGAKILNESGLKLTSADGLNDAAEKIVAAVNA</sequence>
<gene>
    <name evidence="1" type="primary">sucC</name>
    <name type="ordered locus">NGO_0913</name>
</gene>
<proteinExistence type="inferred from homology"/>
<feature type="chain" id="PRO_1000082137" description="Succinate--CoA ligase [ADP-forming] subunit beta">
    <location>
        <begin position="1"/>
        <end position="388"/>
    </location>
</feature>
<feature type="domain" description="ATP-grasp" evidence="1">
    <location>
        <begin position="9"/>
        <end position="245"/>
    </location>
</feature>
<feature type="binding site" evidence="1">
    <location>
        <position position="46"/>
    </location>
    <ligand>
        <name>ATP</name>
        <dbReference type="ChEBI" id="CHEBI:30616"/>
    </ligand>
</feature>
<feature type="binding site" evidence="1">
    <location>
        <begin position="53"/>
        <end position="55"/>
    </location>
    <ligand>
        <name>ATP</name>
        <dbReference type="ChEBI" id="CHEBI:30616"/>
    </ligand>
</feature>
<feature type="binding site" evidence="1">
    <location>
        <position position="100"/>
    </location>
    <ligand>
        <name>ATP</name>
        <dbReference type="ChEBI" id="CHEBI:30616"/>
    </ligand>
</feature>
<feature type="binding site" evidence="1">
    <location>
        <position position="103"/>
    </location>
    <ligand>
        <name>ATP</name>
        <dbReference type="ChEBI" id="CHEBI:30616"/>
    </ligand>
</feature>
<feature type="binding site" evidence="1">
    <location>
        <position position="108"/>
    </location>
    <ligand>
        <name>ATP</name>
        <dbReference type="ChEBI" id="CHEBI:30616"/>
    </ligand>
</feature>
<feature type="binding site" evidence="1">
    <location>
        <position position="200"/>
    </location>
    <ligand>
        <name>Mg(2+)</name>
        <dbReference type="ChEBI" id="CHEBI:18420"/>
    </ligand>
</feature>
<feature type="binding site" evidence="1">
    <location>
        <position position="214"/>
    </location>
    <ligand>
        <name>Mg(2+)</name>
        <dbReference type="ChEBI" id="CHEBI:18420"/>
    </ligand>
</feature>
<feature type="binding site" evidence="1">
    <location>
        <position position="265"/>
    </location>
    <ligand>
        <name>substrate</name>
        <note>ligand shared with subunit alpha</note>
    </ligand>
</feature>
<feature type="binding site" evidence="1">
    <location>
        <begin position="322"/>
        <end position="324"/>
    </location>
    <ligand>
        <name>substrate</name>
        <note>ligand shared with subunit alpha</note>
    </ligand>
</feature>
<comment type="function">
    <text evidence="1">Succinyl-CoA synthetase functions in the citric acid cycle (TCA), coupling the hydrolysis of succinyl-CoA to the synthesis of either ATP or GTP and thus represents the only step of substrate-level phosphorylation in the TCA. The beta subunit provides nucleotide specificity of the enzyme and binds the substrate succinate, while the binding sites for coenzyme A and phosphate are found in the alpha subunit.</text>
</comment>
<comment type="catalytic activity">
    <reaction evidence="1">
        <text>succinate + ATP + CoA = succinyl-CoA + ADP + phosphate</text>
        <dbReference type="Rhea" id="RHEA:17661"/>
        <dbReference type="ChEBI" id="CHEBI:30031"/>
        <dbReference type="ChEBI" id="CHEBI:30616"/>
        <dbReference type="ChEBI" id="CHEBI:43474"/>
        <dbReference type="ChEBI" id="CHEBI:57287"/>
        <dbReference type="ChEBI" id="CHEBI:57292"/>
        <dbReference type="ChEBI" id="CHEBI:456216"/>
        <dbReference type="EC" id="6.2.1.5"/>
    </reaction>
    <physiologicalReaction direction="right-to-left" evidence="1">
        <dbReference type="Rhea" id="RHEA:17663"/>
    </physiologicalReaction>
</comment>
<comment type="catalytic activity">
    <reaction evidence="1">
        <text>GTP + succinate + CoA = succinyl-CoA + GDP + phosphate</text>
        <dbReference type="Rhea" id="RHEA:22120"/>
        <dbReference type="ChEBI" id="CHEBI:30031"/>
        <dbReference type="ChEBI" id="CHEBI:37565"/>
        <dbReference type="ChEBI" id="CHEBI:43474"/>
        <dbReference type="ChEBI" id="CHEBI:57287"/>
        <dbReference type="ChEBI" id="CHEBI:57292"/>
        <dbReference type="ChEBI" id="CHEBI:58189"/>
    </reaction>
    <physiologicalReaction direction="right-to-left" evidence="1">
        <dbReference type="Rhea" id="RHEA:22122"/>
    </physiologicalReaction>
</comment>
<comment type="cofactor">
    <cofactor evidence="1">
        <name>Mg(2+)</name>
        <dbReference type="ChEBI" id="CHEBI:18420"/>
    </cofactor>
    <text evidence="1">Binds 1 Mg(2+) ion per subunit.</text>
</comment>
<comment type="pathway">
    <text evidence="1">Carbohydrate metabolism; tricarboxylic acid cycle; succinate from succinyl-CoA (ligase route): step 1/1.</text>
</comment>
<comment type="subunit">
    <text evidence="1">Heterotetramer of two alpha and two beta subunits.</text>
</comment>
<comment type="similarity">
    <text evidence="1">Belongs to the succinate/malate CoA ligase beta subunit family.</text>
</comment>
<reference key="1">
    <citation type="submission" date="2003-03" db="EMBL/GenBank/DDBJ databases">
        <title>The complete genome sequence of Neisseria gonorrhoeae.</title>
        <authorList>
            <person name="Lewis L.A."/>
            <person name="Gillaspy A.F."/>
            <person name="McLaughlin R.E."/>
            <person name="Gipson M."/>
            <person name="Ducey T.F."/>
            <person name="Ownbey T."/>
            <person name="Hartman K."/>
            <person name="Nydick C."/>
            <person name="Carson M.B."/>
            <person name="Vaughn J."/>
            <person name="Thomson C."/>
            <person name="Song L."/>
            <person name="Lin S."/>
            <person name="Yuan X."/>
            <person name="Najar F."/>
            <person name="Zhan M."/>
            <person name="Ren Q."/>
            <person name="Zhu H."/>
            <person name="Qi S."/>
            <person name="Kenton S.M."/>
            <person name="Lai H."/>
            <person name="White J.D."/>
            <person name="Clifton S."/>
            <person name="Roe B.A."/>
            <person name="Dyer D.W."/>
        </authorList>
    </citation>
    <scope>NUCLEOTIDE SEQUENCE [LARGE SCALE GENOMIC DNA]</scope>
    <source>
        <strain>ATCC 700825 / FA 1090</strain>
    </source>
</reference>
<name>SUCC_NEIG1</name>
<evidence type="ECO:0000255" key="1">
    <source>
        <dbReference type="HAMAP-Rule" id="MF_00558"/>
    </source>
</evidence>
<protein>
    <recommendedName>
        <fullName evidence="1">Succinate--CoA ligase [ADP-forming] subunit beta</fullName>
        <ecNumber evidence="1">6.2.1.5</ecNumber>
    </recommendedName>
    <alternativeName>
        <fullName evidence="1">Succinyl-CoA synthetase subunit beta</fullName>
        <shortName evidence="1">SCS-beta</shortName>
    </alternativeName>
</protein>
<accession>Q5F878</accession>
<organism>
    <name type="scientific">Neisseria gonorrhoeae (strain ATCC 700825 / FA 1090)</name>
    <dbReference type="NCBI Taxonomy" id="242231"/>
    <lineage>
        <taxon>Bacteria</taxon>
        <taxon>Pseudomonadati</taxon>
        <taxon>Pseudomonadota</taxon>
        <taxon>Betaproteobacteria</taxon>
        <taxon>Neisseriales</taxon>
        <taxon>Neisseriaceae</taxon>
        <taxon>Neisseria</taxon>
    </lineage>
</organism>
<dbReference type="EC" id="6.2.1.5" evidence="1"/>
<dbReference type="EMBL" id="AE004969">
    <property type="protein sequence ID" value="AAW89609.1"/>
    <property type="molecule type" value="Genomic_DNA"/>
</dbReference>
<dbReference type="RefSeq" id="WP_003701280.1">
    <property type="nucleotide sequence ID" value="NC_002946.2"/>
</dbReference>
<dbReference type="RefSeq" id="YP_208021.1">
    <property type="nucleotide sequence ID" value="NC_002946.2"/>
</dbReference>
<dbReference type="SMR" id="Q5F878"/>
<dbReference type="STRING" id="242231.NGO_0913"/>
<dbReference type="KEGG" id="ngo:NGO_0913"/>
<dbReference type="PATRIC" id="fig|242231.10.peg.1074"/>
<dbReference type="HOGENOM" id="CLU_037430_0_2_4"/>
<dbReference type="UniPathway" id="UPA00223">
    <property type="reaction ID" value="UER00999"/>
</dbReference>
<dbReference type="Proteomes" id="UP000000535">
    <property type="component" value="Chromosome"/>
</dbReference>
<dbReference type="GO" id="GO:0005829">
    <property type="term" value="C:cytosol"/>
    <property type="evidence" value="ECO:0007669"/>
    <property type="project" value="TreeGrafter"/>
</dbReference>
<dbReference type="GO" id="GO:0042709">
    <property type="term" value="C:succinate-CoA ligase complex"/>
    <property type="evidence" value="ECO:0007669"/>
    <property type="project" value="TreeGrafter"/>
</dbReference>
<dbReference type="GO" id="GO:0005524">
    <property type="term" value="F:ATP binding"/>
    <property type="evidence" value="ECO:0007669"/>
    <property type="project" value="UniProtKB-UniRule"/>
</dbReference>
<dbReference type="GO" id="GO:0000287">
    <property type="term" value="F:magnesium ion binding"/>
    <property type="evidence" value="ECO:0007669"/>
    <property type="project" value="UniProtKB-UniRule"/>
</dbReference>
<dbReference type="GO" id="GO:0004775">
    <property type="term" value="F:succinate-CoA ligase (ADP-forming) activity"/>
    <property type="evidence" value="ECO:0007669"/>
    <property type="project" value="UniProtKB-UniRule"/>
</dbReference>
<dbReference type="GO" id="GO:0004776">
    <property type="term" value="F:succinate-CoA ligase (GDP-forming) activity"/>
    <property type="evidence" value="ECO:0007669"/>
    <property type="project" value="RHEA"/>
</dbReference>
<dbReference type="GO" id="GO:0006104">
    <property type="term" value="P:succinyl-CoA metabolic process"/>
    <property type="evidence" value="ECO:0007669"/>
    <property type="project" value="TreeGrafter"/>
</dbReference>
<dbReference type="GO" id="GO:0006099">
    <property type="term" value="P:tricarboxylic acid cycle"/>
    <property type="evidence" value="ECO:0007669"/>
    <property type="project" value="UniProtKB-UniRule"/>
</dbReference>
<dbReference type="FunFam" id="3.30.1490.20:FF:000002">
    <property type="entry name" value="Succinate--CoA ligase [ADP-forming] subunit beta"/>
    <property type="match status" value="1"/>
</dbReference>
<dbReference type="FunFam" id="3.30.470.20:FF:000002">
    <property type="entry name" value="Succinate--CoA ligase [ADP-forming] subunit beta"/>
    <property type="match status" value="1"/>
</dbReference>
<dbReference type="FunFam" id="3.40.50.261:FF:000001">
    <property type="entry name" value="Succinate--CoA ligase [ADP-forming] subunit beta"/>
    <property type="match status" value="1"/>
</dbReference>
<dbReference type="Gene3D" id="3.30.1490.20">
    <property type="entry name" value="ATP-grasp fold, A domain"/>
    <property type="match status" value="1"/>
</dbReference>
<dbReference type="Gene3D" id="3.30.470.20">
    <property type="entry name" value="ATP-grasp fold, B domain"/>
    <property type="match status" value="1"/>
</dbReference>
<dbReference type="Gene3D" id="3.40.50.261">
    <property type="entry name" value="Succinyl-CoA synthetase domains"/>
    <property type="match status" value="1"/>
</dbReference>
<dbReference type="HAMAP" id="MF_00558">
    <property type="entry name" value="Succ_CoA_beta"/>
    <property type="match status" value="1"/>
</dbReference>
<dbReference type="InterPro" id="IPR011761">
    <property type="entry name" value="ATP-grasp"/>
</dbReference>
<dbReference type="InterPro" id="IPR013650">
    <property type="entry name" value="ATP-grasp_succ-CoA_synth-type"/>
</dbReference>
<dbReference type="InterPro" id="IPR013815">
    <property type="entry name" value="ATP_grasp_subdomain_1"/>
</dbReference>
<dbReference type="InterPro" id="IPR017866">
    <property type="entry name" value="Succ-CoA_synthase_bsu_CS"/>
</dbReference>
<dbReference type="InterPro" id="IPR005811">
    <property type="entry name" value="SUCC_ACL_C"/>
</dbReference>
<dbReference type="InterPro" id="IPR005809">
    <property type="entry name" value="Succ_CoA_ligase-like_bsu"/>
</dbReference>
<dbReference type="InterPro" id="IPR016102">
    <property type="entry name" value="Succinyl-CoA_synth-like"/>
</dbReference>
<dbReference type="NCBIfam" id="NF001913">
    <property type="entry name" value="PRK00696.1"/>
    <property type="match status" value="1"/>
</dbReference>
<dbReference type="NCBIfam" id="TIGR01016">
    <property type="entry name" value="sucCoAbeta"/>
    <property type="match status" value="1"/>
</dbReference>
<dbReference type="PANTHER" id="PTHR11815:SF10">
    <property type="entry name" value="SUCCINATE--COA LIGASE [GDP-FORMING] SUBUNIT BETA, MITOCHONDRIAL"/>
    <property type="match status" value="1"/>
</dbReference>
<dbReference type="PANTHER" id="PTHR11815">
    <property type="entry name" value="SUCCINYL-COA SYNTHETASE BETA CHAIN"/>
    <property type="match status" value="1"/>
</dbReference>
<dbReference type="Pfam" id="PF08442">
    <property type="entry name" value="ATP-grasp_2"/>
    <property type="match status" value="1"/>
</dbReference>
<dbReference type="Pfam" id="PF00549">
    <property type="entry name" value="Ligase_CoA"/>
    <property type="match status" value="1"/>
</dbReference>
<dbReference type="PIRSF" id="PIRSF001554">
    <property type="entry name" value="SucCS_beta"/>
    <property type="match status" value="1"/>
</dbReference>
<dbReference type="SUPFAM" id="SSF56059">
    <property type="entry name" value="Glutathione synthetase ATP-binding domain-like"/>
    <property type="match status" value="1"/>
</dbReference>
<dbReference type="SUPFAM" id="SSF52210">
    <property type="entry name" value="Succinyl-CoA synthetase domains"/>
    <property type="match status" value="1"/>
</dbReference>
<dbReference type="PROSITE" id="PS50975">
    <property type="entry name" value="ATP_GRASP"/>
    <property type="match status" value="1"/>
</dbReference>
<dbReference type="PROSITE" id="PS01217">
    <property type="entry name" value="SUCCINYL_COA_LIG_3"/>
    <property type="match status" value="1"/>
</dbReference>